<gene>
    <name evidence="1" type="primary">rnt</name>
    <name type="ordered locus">STM1434</name>
</gene>
<reference key="1">
    <citation type="journal article" date="2001" name="Nature">
        <title>Complete genome sequence of Salmonella enterica serovar Typhimurium LT2.</title>
        <authorList>
            <person name="McClelland M."/>
            <person name="Sanderson K.E."/>
            <person name="Spieth J."/>
            <person name="Clifton S.W."/>
            <person name="Latreille P."/>
            <person name="Courtney L."/>
            <person name="Porwollik S."/>
            <person name="Ali J."/>
            <person name="Dante M."/>
            <person name="Du F."/>
            <person name="Hou S."/>
            <person name="Layman D."/>
            <person name="Leonard S."/>
            <person name="Nguyen C."/>
            <person name="Scott K."/>
            <person name="Holmes A."/>
            <person name="Grewal N."/>
            <person name="Mulvaney E."/>
            <person name="Ryan E."/>
            <person name="Sun H."/>
            <person name="Florea L."/>
            <person name="Miller W."/>
            <person name="Stoneking T."/>
            <person name="Nhan M."/>
            <person name="Waterston R."/>
            <person name="Wilson R.K."/>
        </authorList>
    </citation>
    <scope>NUCLEOTIDE SEQUENCE [LARGE SCALE GENOMIC DNA]</scope>
    <source>
        <strain>LT2 / SGSC1412 / ATCC 700720</strain>
    </source>
</reference>
<keyword id="KW-0269">Exonuclease</keyword>
<keyword id="KW-0378">Hydrolase</keyword>
<keyword id="KW-0460">Magnesium</keyword>
<keyword id="KW-0479">Metal-binding</keyword>
<keyword id="KW-0540">Nuclease</keyword>
<keyword id="KW-1185">Reference proteome</keyword>
<keyword id="KW-0819">tRNA processing</keyword>
<proteinExistence type="inferred from homology"/>
<accession>P66684</accession>
<accession>Q8XFQ9</accession>
<name>RNT_SALTY</name>
<organism>
    <name type="scientific">Salmonella typhimurium (strain LT2 / SGSC1412 / ATCC 700720)</name>
    <dbReference type="NCBI Taxonomy" id="99287"/>
    <lineage>
        <taxon>Bacteria</taxon>
        <taxon>Pseudomonadati</taxon>
        <taxon>Pseudomonadota</taxon>
        <taxon>Gammaproteobacteria</taxon>
        <taxon>Enterobacterales</taxon>
        <taxon>Enterobacteriaceae</taxon>
        <taxon>Salmonella</taxon>
    </lineage>
</organism>
<evidence type="ECO:0000255" key="1">
    <source>
        <dbReference type="HAMAP-Rule" id="MF_00157"/>
    </source>
</evidence>
<sequence>MSDNAQLSGLCDRFRGFYPVVIDVETAGFNAKTDALLEIAAITLKMDEQGWLMPDMTLHFHVEPFAGANLQPEALAFNGIDPSNPLRGAVSEYEALHAIFKMVRKGIKDSGCSRAIMVAHNATFDHSFMMAAAERASLKRNPFHPFVTFDTAALSGLALGQTVLSKACLAAGMEFDGEKAHSALYDTERTAVLFCEIVNRWKRLGGWPLPLPTDK</sequence>
<dbReference type="EC" id="3.1.13.-" evidence="1"/>
<dbReference type="EMBL" id="AE006468">
    <property type="protein sequence ID" value="AAL20356.1"/>
    <property type="molecule type" value="Genomic_DNA"/>
</dbReference>
<dbReference type="RefSeq" id="NP_460397.1">
    <property type="nucleotide sequence ID" value="NC_003197.2"/>
</dbReference>
<dbReference type="RefSeq" id="WP_001282267.1">
    <property type="nucleotide sequence ID" value="NC_003197.2"/>
</dbReference>
<dbReference type="SMR" id="P66684"/>
<dbReference type="STRING" id="99287.STM1434"/>
<dbReference type="PaxDb" id="99287-STM1434"/>
<dbReference type="GeneID" id="1252952"/>
<dbReference type="KEGG" id="stm:STM1434"/>
<dbReference type="PATRIC" id="fig|99287.12.peg.1517"/>
<dbReference type="HOGENOM" id="CLU_082724_0_0_6"/>
<dbReference type="OMA" id="CYMVNHL"/>
<dbReference type="PhylomeDB" id="P66684"/>
<dbReference type="BioCyc" id="SENT99287:STM1434-MONOMER"/>
<dbReference type="Proteomes" id="UP000001014">
    <property type="component" value="Chromosome"/>
</dbReference>
<dbReference type="GO" id="GO:0005829">
    <property type="term" value="C:cytosol"/>
    <property type="evidence" value="ECO:0000318"/>
    <property type="project" value="GO_Central"/>
</dbReference>
<dbReference type="GO" id="GO:0008408">
    <property type="term" value="F:3'-5' exonuclease activity"/>
    <property type="evidence" value="ECO:0000318"/>
    <property type="project" value="GO_Central"/>
</dbReference>
<dbReference type="GO" id="GO:0000287">
    <property type="term" value="F:magnesium ion binding"/>
    <property type="evidence" value="ECO:0007669"/>
    <property type="project" value="UniProtKB-UniRule"/>
</dbReference>
<dbReference type="GO" id="GO:0003676">
    <property type="term" value="F:nucleic acid binding"/>
    <property type="evidence" value="ECO:0007669"/>
    <property type="project" value="InterPro"/>
</dbReference>
<dbReference type="GO" id="GO:0016896">
    <property type="term" value="F:RNA exonuclease activity, producing 5'-phosphomonoesters"/>
    <property type="evidence" value="ECO:0007669"/>
    <property type="project" value="UniProtKB-UniRule"/>
</dbReference>
<dbReference type="GO" id="GO:0045004">
    <property type="term" value="P:DNA replication proofreading"/>
    <property type="evidence" value="ECO:0000318"/>
    <property type="project" value="GO_Central"/>
</dbReference>
<dbReference type="GO" id="GO:0008033">
    <property type="term" value="P:tRNA processing"/>
    <property type="evidence" value="ECO:0007669"/>
    <property type="project" value="UniProtKB-KW"/>
</dbReference>
<dbReference type="CDD" id="cd06134">
    <property type="entry name" value="RNaseT"/>
    <property type="match status" value="1"/>
</dbReference>
<dbReference type="FunFam" id="3.30.420.10:FF:000009">
    <property type="entry name" value="Ribonuclease T"/>
    <property type="match status" value="1"/>
</dbReference>
<dbReference type="Gene3D" id="3.30.420.10">
    <property type="entry name" value="Ribonuclease H-like superfamily/Ribonuclease H"/>
    <property type="match status" value="1"/>
</dbReference>
<dbReference type="HAMAP" id="MF_00157">
    <property type="entry name" value="RNase_T"/>
    <property type="match status" value="1"/>
</dbReference>
<dbReference type="InterPro" id="IPR013520">
    <property type="entry name" value="Exonuclease_RNaseT/DNA_pol3"/>
</dbReference>
<dbReference type="InterPro" id="IPR005987">
    <property type="entry name" value="RNase_T"/>
</dbReference>
<dbReference type="InterPro" id="IPR012337">
    <property type="entry name" value="RNaseH-like_sf"/>
</dbReference>
<dbReference type="InterPro" id="IPR036397">
    <property type="entry name" value="RNaseH_sf"/>
</dbReference>
<dbReference type="NCBIfam" id="TIGR01298">
    <property type="entry name" value="RNaseT"/>
    <property type="match status" value="1"/>
</dbReference>
<dbReference type="PANTHER" id="PTHR30231">
    <property type="entry name" value="DNA POLYMERASE III SUBUNIT EPSILON"/>
    <property type="match status" value="1"/>
</dbReference>
<dbReference type="PANTHER" id="PTHR30231:SF2">
    <property type="entry name" value="RIBONUCLEASE T"/>
    <property type="match status" value="1"/>
</dbReference>
<dbReference type="Pfam" id="PF00929">
    <property type="entry name" value="RNase_T"/>
    <property type="match status" value="1"/>
</dbReference>
<dbReference type="SMART" id="SM00479">
    <property type="entry name" value="EXOIII"/>
    <property type="match status" value="1"/>
</dbReference>
<dbReference type="SUPFAM" id="SSF53098">
    <property type="entry name" value="Ribonuclease H-like"/>
    <property type="match status" value="1"/>
</dbReference>
<comment type="function">
    <text evidence="1">Trims short 3' overhangs of a variety of RNA species, leaving a one or two nucleotide 3' overhang. Responsible for the end-turnover of tRNA: specifically removes the terminal AMP residue from uncharged tRNA (tRNA-C-C-A). Also appears to be involved in tRNA biosynthesis.</text>
</comment>
<comment type="cofactor">
    <cofactor evidence="1">
        <name>Mg(2+)</name>
        <dbReference type="ChEBI" id="CHEBI:18420"/>
    </cofactor>
    <text evidence="1">Binds two Mg(2+) per subunit. The active form of the enzyme binds two Mg(2+) ions in its active site. The first Mg(2+) forms only one salt bridge with the protein.</text>
</comment>
<comment type="subunit">
    <text evidence="1">Homodimer.</text>
</comment>
<comment type="similarity">
    <text evidence="1">Belongs to the RNase T family.</text>
</comment>
<protein>
    <recommendedName>
        <fullName evidence="1">Ribonuclease T</fullName>
        <ecNumber evidence="1">3.1.13.-</ecNumber>
    </recommendedName>
    <alternativeName>
        <fullName evidence="1">Exoribonuclease T</fullName>
        <shortName evidence="1">RNase T</shortName>
    </alternativeName>
</protein>
<feature type="chain" id="PRO_0000208972" description="Ribonuclease T">
    <location>
        <begin position="1"/>
        <end position="215"/>
    </location>
</feature>
<feature type="domain" description="Exonuclease" evidence="1">
    <location>
        <begin position="20"/>
        <end position="194"/>
    </location>
</feature>
<feature type="active site" description="Proton donor/acceptor" evidence="1">
    <location>
        <position position="181"/>
    </location>
</feature>
<feature type="binding site" evidence="1">
    <location>
        <position position="23"/>
    </location>
    <ligand>
        <name>Mg(2+)</name>
        <dbReference type="ChEBI" id="CHEBI:18420"/>
        <label>1</label>
        <note>catalytic</note>
    </ligand>
</feature>
<feature type="binding site" evidence="1">
    <location>
        <position position="23"/>
    </location>
    <ligand>
        <name>Mg(2+)</name>
        <dbReference type="ChEBI" id="CHEBI:18420"/>
        <label>2</label>
        <note>catalytic</note>
    </ligand>
</feature>
<feature type="binding site" evidence="1">
    <location>
        <position position="25"/>
    </location>
    <ligand>
        <name>Mg(2+)</name>
        <dbReference type="ChEBI" id="CHEBI:18420"/>
        <label>2</label>
        <note>catalytic</note>
    </ligand>
</feature>
<feature type="binding site" evidence="1">
    <location>
        <position position="181"/>
    </location>
    <ligand>
        <name>Mg(2+)</name>
        <dbReference type="ChEBI" id="CHEBI:18420"/>
        <label>2</label>
        <note>catalytic</note>
    </ligand>
</feature>
<feature type="binding site" evidence="1">
    <location>
        <position position="186"/>
    </location>
    <ligand>
        <name>Mg(2+)</name>
        <dbReference type="ChEBI" id="CHEBI:18420"/>
        <label>2</label>
        <note>catalytic</note>
    </ligand>
</feature>
<feature type="site" description="Important for substrate binding and specificity" evidence="1">
    <location>
        <position position="29"/>
    </location>
</feature>
<feature type="site" description="Important for substrate binding and specificity" evidence="1">
    <location>
        <position position="77"/>
    </location>
</feature>
<feature type="site" description="Important for substrate binding and specificity" evidence="1">
    <location>
        <position position="124"/>
    </location>
</feature>
<feature type="site" description="Important for substrate binding and specificity" evidence="1">
    <location>
        <position position="146"/>
    </location>
</feature>